<organism>
    <name type="scientific">Helicobacter pylori (strain ATCC 700392 / 26695)</name>
    <name type="common">Campylobacter pylori</name>
    <dbReference type="NCBI Taxonomy" id="85962"/>
    <lineage>
        <taxon>Bacteria</taxon>
        <taxon>Pseudomonadati</taxon>
        <taxon>Campylobacterota</taxon>
        <taxon>Epsilonproteobacteria</taxon>
        <taxon>Campylobacterales</taxon>
        <taxon>Helicobacteraceae</taxon>
        <taxon>Helicobacter</taxon>
    </lineage>
</organism>
<name>Y285_HELPY</name>
<evidence type="ECO:0000255" key="1">
    <source>
        <dbReference type="PROSITE-ProRule" id="PRU00780"/>
    </source>
</evidence>
<evidence type="ECO:0000255" key="2">
    <source>
        <dbReference type="PROSITE-ProRule" id="PRU01266"/>
    </source>
</evidence>
<evidence type="ECO:0000305" key="3"/>
<keyword id="KW-0004">4Fe-4S</keyword>
<keyword id="KW-0408">Iron</keyword>
<keyword id="KW-0411">Iron-sulfur</keyword>
<keyword id="KW-0479">Metal-binding</keyword>
<keyword id="KW-1185">Reference proteome</keyword>
<keyword id="KW-0949">S-adenosyl-L-methionine</keyword>
<keyword id="KW-0808">Transferase</keyword>
<gene>
    <name type="ordered locus">HP_0285</name>
</gene>
<accession>P56130</accession>
<dbReference type="EC" id="2.-.-.-"/>
<dbReference type="EMBL" id="AE000511">
    <property type="protein sequence ID" value="AAD07353.1"/>
    <property type="molecule type" value="Genomic_DNA"/>
</dbReference>
<dbReference type="PIR" id="E64555">
    <property type="entry name" value="E64555"/>
</dbReference>
<dbReference type="RefSeq" id="NP_207083.1">
    <property type="nucleotide sequence ID" value="NC_000915.1"/>
</dbReference>
<dbReference type="SMR" id="P56130"/>
<dbReference type="DIP" id="DIP-3406N"/>
<dbReference type="IntAct" id="P56130">
    <property type="interactions" value="4"/>
</dbReference>
<dbReference type="MINT" id="P56130"/>
<dbReference type="STRING" id="85962.HP_0285"/>
<dbReference type="PaxDb" id="85962-C694_01440"/>
<dbReference type="EnsemblBacteria" id="AAD07353">
    <property type="protein sequence ID" value="AAD07353"/>
    <property type="gene ID" value="HP_0285"/>
</dbReference>
<dbReference type="KEGG" id="heo:C694_01440"/>
<dbReference type="KEGG" id="hpy:HP_0285"/>
<dbReference type="PATRIC" id="fig|85962.47.peg.305"/>
<dbReference type="eggNOG" id="COG0621">
    <property type="taxonomic scope" value="Bacteria"/>
</dbReference>
<dbReference type="InParanoid" id="P56130"/>
<dbReference type="OrthoDB" id="9805215at2"/>
<dbReference type="PhylomeDB" id="P56130"/>
<dbReference type="Proteomes" id="UP000000429">
    <property type="component" value="Chromosome"/>
</dbReference>
<dbReference type="GO" id="GO:0051539">
    <property type="term" value="F:4 iron, 4 sulfur cluster binding"/>
    <property type="evidence" value="ECO:0007669"/>
    <property type="project" value="UniProtKB-KW"/>
</dbReference>
<dbReference type="GO" id="GO:0046872">
    <property type="term" value="F:metal ion binding"/>
    <property type="evidence" value="ECO:0007669"/>
    <property type="project" value="UniProtKB-KW"/>
</dbReference>
<dbReference type="GO" id="GO:0035598">
    <property type="term" value="F:N6-threonylcarbomyladenosine methylthiotransferase activity"/>
    <property type="evidence" value="ECO:0000318"/>
    <property type="project" value="GO_Central"/>
</dbReference>
<dbReference type="GO" id="GO:0035600">
    <property type="term" value="P:tRNA methylthiolation"/>
    <property type="evidence" value="ECO:0000318"/>
    <property type="project" value="GO_Central"/>
</dbReference>
<dbReference type="FunFam" id="3.80.30.20:FF:000019">
    <property type="entry name" value="tRNA methylthiotransferase YqeV"/>
    <property type="match status" value="1"/>
</dbReference>
<dbReference type="Gene3D" id="3.40.50.12160">
    <property type="entry name" value="Methylthiotransferase, N-terminal domain"/>
    <property type="match status" value="1"/>
</dbReference>
<dbReference type="Gene3D" id="3.80.30.20">
    <property type="entry name" value="tm_1862 like domain"/>
    <property type="match status" value="1"/>
</dbReference>
<dbReference type="InterPro" id="IPR006638">
    <property type="entry name" value="Elp3/MiaA/NifB-like_rSAM"/>
</dbReference>
<dbReference type="InterPro" id="IPR005839">
    <property type="entry name" value="Methylthiotransferase"/>
</dbReference>
<dbReference type="InterPro" id="IPR020612">
    <property type="entry name" value="Methylthiotransferase_CS"/>
</dbReference>
<dbReference type="InterPro" id="IPR013848">
    <property type="entry name" value="Methylthiotransferase_N"/>
</dbReference>
<dbReference type="InterPro" id="IPR038135">
    <property type="entry name" value="Methylthiotransferase_N_sf"/>
</dbReference>
<dbReference type="InterPro" id="IPR006467">
    <property type="entry name" value="MiaB-like_bact"/>
</dbReference>
<dbReference type="InterPro" id="IPR007197">
    <property type="entry name" value="rSAM"/>
</dbReference>
<dbReference type="InterPro" id="IPR023404">
    <property type="entry name" value="rSAM_horseshoe"/>
</dbReference>
<dbReference type="NCBIfam" id="TIGR01579">
    <property type="entry name" value="MiaB-like-C"/>
    <property type="match status" value="1"/>
</dbReference>
<dbReference type="NCBIfam" id="TIGR00089">
    <property type="entry name" value="MiaB/RimO family radical SAM methylthiotransferase"/>
    <property type="match status" value="1"/>
</dbReference>
<dbReference type="PANTHER" id="PTHR11918">
    <property type="entry name" value="RADICAL SAM PROTEINS"/>
    <property type="match status" value="1"/>
</dbReference>
<dbReference type="PANTHER" id="PTHR11918:SF45">
    <property type="entry name" value="THREONYLCARBAMOYLADENOSINE TRNA METHYLTHIOTRANSFERASE"/>
    <property type="match status" value="1"/>
</dbReference>
<dbReference type="Pfam" id="PF04055">
    <property type="entry name" value="Radical_SAM"/>
    <property type="match status" value="1"/>
</dbReference>
<dbReference type="Pfam" id="PF00919">
    <property type="entry name" value="UPF0004"/>
    <property type="match status" value="1"/>
</dbReference>
<dbReference type="SFLD" id="SFLDG01082">
    <property type="entry name" value="B12-binding_domain_containing"/>
    <property type="match status" value="1"/>
</dbReference>
<dbReference type="SFLD" id="SFLDS00029">
    <property type="entry name" value="Radical_SAM"/>
    <property type="match status" value="1"/>
</dbReference>
<dbReference type="SMART" id="SM00729">
    <property type="entry name" value="Elp3"/>
    <property type="match status" value="1"/>
</dbReference>
<dbReference type="SUPFAM" id="SSF102114">
    <property type="entry name" value="Radical SAM enzymes"/>
    <property type="match status" value="1"/>
</dbReference>
<dbReference type="PROSITE" id="PS51449">
    <property type="entry name" value="MTTASE_N"/>
    <property type="match status" value="1"/>
</dbReference>
<dbReference type="PROSITE" id="PS01278">
    <property type="entry name" value="MTTASE_RADICAL"/>
    <property type="match status" value="1"/>
</dbReference>
<dbReference type="PROSITE" id="PS51918">
    <property type="entry name" value="RADICAL_SAM"/>
    <property type="match status" value="1"/>
</dbReference>
<reference key="1">
    <citation type="journal article" date="1997" name="Nature">
        <title>The complete genome sequence of the gastric pathogen Helicobacter pylori.</title>
        <authorList>
            <person name="Tomb J.-F."/>
            <person name="White O."/>
            <person name="Kerlavage A.R."/>
            <person name="Clayton R.A."/>
            <person name="Sutton G.G."/>
            <person name="Fleischmann R.D."/>
            <person name="Ketchum K.A."/>
            <person name="Klenk H.-P."/>
            <person name="Gill S.R."/>
            <person name="Dougherty B.A."/>
            <person name="Nelson K.E."/>
            <person name="Quackenbush J."/>
            <person name="Zhou L."/>
            <person name="Kirkness E.F."/>
            <person name="Peterson S.N."/>
            <person name="Loftus B.J."/>
            <person name="Richardson D.L."/>
            <person name="Dodson R.J."/>
            <person name="Khalak H.G."/>
            <person name="Glodek A."/>
            <person name="McKenney K."/>
            <person name="FitzGerald L.M."/>
            <person name="Lee N."/>
            <person name="Adams M.D."/>
            <person name="Hickey E.K."/>
            <person name="Berg D.E."/>
            <person name="Gocayne J.D."/>
            <person name="Utterback T.R."/>
            <person name="Peterson J.D."/>
            <person name="Kelley J.M."/>
            <person name="Cotton M.D."/>
            <person name="Weidman J.F."/>
            <person name="Fujii C."/>
            <person name="Bowman C."/>
            <person name="Watthey L."/>
            <person name="Wallin E."/>
            <person name="Hayes W.S."/>
            <person name="Borodovsky M."/>
            <person name="Karp P.D."/>
            <person name="Smith H.O."/>
            <person name="Fraser C.M."/>
            <person name="Venter J.C."/>
        </authorList>
    </citation>
    <scope>NUCLEOTIDE SEQUENCE [LARGE SCALE GENOMIC DNA]</scope>
    <source>
        <strain>ATCC 700392 / 26695</strain>
    </source>
</reference>
<proteinExistence type="inferred from homology"/>
<protein>
    <recommendedName>
        <fullName>Putative methylthiotransferase HP_0285</fullName>
        <ecNumber>2.-.-.-</ecNumber>
    </recommendedName>
</protein>
<sequence>MKKVYFKTFGCRTNLFDTQVMSENLKDFSTTLEEQEADIIIINSCTVTNGADSAVRSYAKKMARLDKEVLFTGCGVKTQGKELFEKGFLKGVFGHDNKEKINALLQEKKRFFIDDNLENKHLDTTMVSEFVGKTRAFIKIQEGCDFDCNYCIIPSVRGRARSFEERKILEQVGLLCSKGVQEVVLTGTNVGSYGKDRGSNIARLIKKLSQIAGLKRIRIGSLEPNQINDEFLELLEEDFLEKHLHIALQHSHDLMLERMNRRNRTKSDRELLETIASKNFAIGTDFIVGHPGESGSVFEKAFKNLESLPLTHIHPFIYSKRKDTPSSLMTDSVSLEDSKKRLNAIKDLIFHKNKAFRQLQLKLNTPLKALVEVQKDGEFKALDQFFNPIKIKSDKPLRASFLEIKEYEIKERENHAVF</sequence>
<comment type="cofactor">
    <cofactor evidence="1">
        <name>[4Fe-4S] cluster</name>
        <dbReference type="ChEBI" id="CHEBI:49883"/>
    </cofactor>
    <text evidence="1">Binds 2 [4Fe-4S] clusters. One cluster is coordinated with 3 cysteines and an exchangeable S-adenosyl-L-methionine.</text>
</comment>
<comment type="similarity">
    <text evidence="3">Belongs to the methylthiotransferase family.</text>
</comment>
<feature type="chain" id="PRO_0000141742" description="Putative methylthiotransferase HP_0285">
    <location>
        <begin position="1"/>
        <end position="418"/>
    </location>
</feature>
<feature type="domain" description="MTTase N-terminal" evidence="1">
    <location>
        <begin position="2"/>
        <end position="110"/>
    </location>
</feature>
<feature type="domain" description="Radical SAM core" evidence="2">
    <location>
        <begin position="130"/>
        <end position="355"/>
    </location>
</feature>
<feature type="binding site" evidence="1">
    <location>
        <position position="11"/>
    </location>
    <ligand>
        <name>[4Fe-4S] cluster</name>
        <dbReference type="ChEBI" id="CHEBI:49883"/>
        <label>1</label>
    </ligand>
</feature>
<feature type="binding site" evidence="1">
    <location>
        <position position="45"/>
    </location>
    <ligand>
        <name>[4Fe-4S] cluster</name>
        <dbReference type="ChEBI" id="CHEBI:49883"/>
        <label>1</label>
    </ligand>
</feature>
<feature type="binding site" evidence="1">
    <location>
        <position position="74"/>
    </location>
    <ligand>
        <name>[4Fe-4S] cluster</name>
        <dbReference type="ChEBI" id="CHEBI:49883"/>
        <label>1</label>
    </ligand>
</feature>
<feature type="binding site" evidence="1">
    <location>
        <position position="144"/>
    </location>
    <ligand>
        <name>[4Fe-4S] cluster</name>
        <dbReference type="ChEBI" id="CHEBI:49883"/>
        <label>2</label>
        <note>4Fe-4S-S-AdoMet</note>
    </ligand>
</feature>
<feature type="binding site" evidence="1">
    <location>
        <position position="148"/>
    </location>
    <ligand>
        <name>[4Fe-4S] cluster</name>
        <dbReference type="ChEBI" id="CHEBI:49883"/>
        <label>2</label>
        <note>4Fe-4S-S-AdoMet</note>
    </ligand>
</feature>
<feature type="binding site" evidence="1">
    <location>
        <position position="151"/>
    </location>
    <ligand>
        <name>[4Fe-4S] cluster</name>
        <dbReference type="ChEBI" id="CHEBI:49883"/>
        <label>2</label>
        <note>4Fe-4S-S-AdoMet</note>
    </ligand>
</feature>